<feature type="chain" id="PRO_0000388984" description="Ribosomal RNA large subunit methyltransferase M">
    <location>
        <begin position="1"/>
        <end position="366"/>
    </location>
</feature>
<feature type="active site" description="Proton acceptor" evidence="1">
    <location>
        <position position="306"/>
    </location>
</feature>
<feature type="binding site" evidence="1">
    <location>
        <position position="188"/>
    </location>
    <ligand>
        <name>S-adenosyl-L-methionine</name>
        <dbReference type="ChEBI" id="CHEBI:59789"/>
    </ligand>
</feature>
<feature type="binding site" evidence="1">
    <location>
        <begin position="221"/>
        <end position="224"/>
    </location>
    <ligand>
        <name>S-adenosyl-L-methionine</name>
        <dbReference type="ChEBI" id="CHEBI:59789"/>
    </ligand>
</feature>
<feature type="binding site" evidence="1">
    <location>
        <position position="240"/>
    </location>
    <ligand>
        <name>S-adenosyl-L-methionine</name>
        <dbReference type="ChEBI" id="CHEBI:59789"/>
    </ligand>
</feature>
<feature type="binding site" evidence="1">
    <location>
        <position position="260"/>
    </location>
    <ligand>
        <name>S-adenosyl-L-methionine</name>
        <dbReference type="ChEBI" id="CHEBI:59789"/>
    </ligand>
</feature>
<feature type="binding site" evidence="1">
    <location>
        <position position="277"/>
    </location>
    <ligand>
        <name>S-adenosyl-L-methionine</name>
        <dbReference type="ChEBI" id="CHEBI:59789"/>
    </ligand>
</feature>
<evidence type="ECO:0000255" key="1">
    <source>
        <dbReference type="HAMAP-Rule" id="MF_01551"/>
    </source>
</evidence>
<proteinExistence type="inferred from homology"/>
<protein>
    <recommendedName>
        <fullName evidence="1">Ribosomal RNA large subunit methyltransferase M</fullName>
        <ecNumber evidence="1">2.1.1.186</ecNumber>
    </recommendedName>
    <alternativeName>
        <fullName evidence="1">23S rRNA (cytidine2498-2'-O)-methyltransferase</fullName>
    </alternativeName>
    <alternativeName>
        <fullName evidence="1">23S rRNA 2'-O-ribose methyltransferase RlmM</fullName>
    </alternativeName>
</protein>
<organism>
    <name type="scientific">Escherichia coli O157:H7 (strain TW14359 / EHEC)</name>
    <dbReference type="NCBI Taxonomy" id="544404"/>
    <lineage>
        <taxon>Bacteria</taxon>
        <taxon>Pseudomonadati</taxon>
        <taxon>Pseudomonadota</taxon>
        <taxon>Gammaproteobacteria</taxon>
        <taxon>Enterobacterales</taxon>
        <taxon>Enterobacteriaceae</taxon>
        <taxon>Escherichia</taxon>
    </lineage>
</organism>
<name>RLMM_ECO5T</name>
<dbReference type="EC" id="2.1.1.186" evidence="1"/>
<dbReference type="EMBL" id="CP001368">
    <property type="protein sequence ID" value="ACT73508.1"/>
    <property type="molecule type" value="Genomic_DNA"/>
</dbReference>
<dbReference type="RefSeq" id="WP_001045520.1">
    <property type="nucleotide sequence ID" value="NC_013008.1"/>
</dbReference>
<dbReference type="SMR" id="C6USC2"/>
<dbReference type="GeneID" id="75203803"/>
<dbReference type="KEGG" id="etw:ECSP_3758"/>
<dbReference type="HOGENOM" id="CLU_043780_0_0_6"/>
<dbReference type="GO" id="GO:0005737">
    <property type="term" value="C:cytoplasm"/>
    <property type="evidence" value="ECO:0007669"/>
    <property type="project" value="UniProtKB-SubCell"/>
</dbReference>
<dbReference type="GO" id="GO:0008757">
    <property type="term" value="F:S-adenosylmethionine-dependent methyltransferase activity"/>
    <property type="evidence" value="ECO:0007669"/>
    <property type="project" value="UniProtKB-UniRule"/>
</dbReference>
<dbReference type="GO" id="GO:0032259">
    <property type="term" value="P:methylation"/>
    <property type="evidence" value="ECO:0007669"/>
    <property type="project" value="UniProtKB-KW"/>
</dbReference>
<dbReference type="GO" id="GO:0006364">
    <property type="term" value="P:rRNA processing"/>
    <property type="evidence" value="ECO:0007669"/>
    <property type="project" value="UniProtKB-UniRule"/>
</dbReference>
<dbReference type="FunFam" id="3.30.2300.20:FF:000001">
    <property type="entry name" value="Ribosomal RNA large subunit methyltransferase M"/>
    <property type="match status" value="1"/>
</dbReference>
<dbReference type="FunFam" id="3.30.70.2810:FF:000001">
    <property type="entry name" value="Ribosomal RNA large subunit methyltransferase M"/>
    <property type="match status" value="1"/>
</dbReference>
<dbReference type="FunFam" id="3.40.50.150:FF:000020">
    <property type="entry name" value="Ribosomal RNA large subunit methyltransferase M"/>
    <property type="match status" value="1"/>
</dbReference>
<dbReference type="Gene3D" id="3.30.2300.20">
    <property type="match status" value="1"/>
</dbReference>
<dbReference type="Gene3D" id="3.30.70.2810">
    <property type="match status" value="1"/>
</dbReference>
<dbReference type="Gene3D" id="3.40.50.150">
    <property type="entry name" value="Vaccinia Virus protein VP39"/>
    <property type="match status" value="1"/>
</dbReference>
<dbReference type="HAMAP" id="MF_01551">
    <property type="entry name" value="23SrRNA_methyltr_M"/>
    <property type="match status" value="1"/>
</dbReference>
<dbReference type="InterPro" id="IPR040739">
    <property type="entry name" value="RlmM_FDX"/>
</dbReference>
<dbReference type="InterPro" id="IPR048646">
    <property type="entry name" value="RlmM_THUMP-like"/>
</dbReference>
<dbReference type="InterPro" id="IPR002877">
    <property type="entry name" value="RNA_MeTrfase_FtsJ_dom"/>
</dbReference>
<dbReference type="InterPro" id="IPR011224">
    <property type="entry name" value="rRNA_MeTrfase_M"/>
</dbReference>
<dbReference type="InterPro" id="IPR029063">
    <property type="entry name" value="SAM-dependent_MTases_sf"/>
</dbReference>
<dbReference type="NCBIfam" id="NF008734">
    <property type="entry name" value="PRK11760.1"/>
    <property type="match status" value="1"/>
</dbReference>
<dbReference type="PANTHER" id="PTHR37524">
    <property type="entry name" value="RIBOSOMAL RNA LARGE SUBUNIT METHYLTRANSFERASE M"/>
    <property type="match status" value="1"/>
</dbReference>
<dbReference type="PANTHER" id="PTHR37524:SF2">
    <property type="entry name" value="RIBOSOMAL RNA METHYLTRANSFERASE FTSJ DOMAIN-CONTAINING PROTEIN"/>
    <property type="match status" value="1"/>
</dbReference>
<dbReference type="Pfam" id="PF01728">
    <property type="entry name" value="FtsJ"/>
    <property type="match status" value="1"/>
</dbReference>
<dbReference type="Pfam" id="PF18125">
    <property type="entry name" value="RlmM_FDX"/>
    <property type="match status" value="1"/>
</dbReference>
<dbReference type="Pfam" id="PF21239">
    <property type="entry name" value="RLMM_N"/>
    <property type="match status" value="1"/>
</dbReference>
<dbReference type="PIRSF" id="PIRSF028774">
    <property type="entry name" value="UCP028774"/>
    <property type="match status" value="1"/>
</dbReference>
<dbReference type="SUPFAM" id="SSF53335">
    <property type="entry name" value="S-adenosyl-L-methionine-dependent methyltransferases"/>
    <property type="match status" value="1"/>
</dbReference>
<reference key="1">
    <citation type="journal article" date="2009" name="Infect. Immun.">
        <title>Analysis of the genome of the Escherichia coli O157:H7 2006 spinach-associated outbreak isolate indicates candidate genes that may enhance virulence.</title>
        <authorList>
            <person name="Kulasekara B.R."/>
            <person name="Jacobs M."/>
            <person name="Zhou Y."/>
            <person name="Wu Z."/>
            <person name="Sims E."/>
            <person name="Saenphimmachak C."/>
            <person name="Rohmer L."/>
            <person name="Ritchie J.M."/>
            <person name="Radey M."/>
            <person name="McKevitt M."/>
            <person name="Freeman T.L."/>
            <person name="Hayden H."/>
            <person name="Haugen E."/>
            <person name="Gillett W."/>
            <person name="Fong C."/>
            <person name="Chang J."/>
            <person name="Beskhlebnaya V."/>
            <person name="Waldor M.K."/>
            <person name="Samadpour M."/>
            <person name="Whittam T.S."/>
            <person name="Kaul R."/>
            <person name="Brittnacher M."/>
            <person name="Miller S.I."/>
        </authorList>
    </citation>
    <scope>NUCLEOTIDE SEQUENCE [LARGE SCALE GENOMIC DNA]</scope>
    <source>
        <strain>TW14359 / EHEC</strain>
    </source>
</reference>
<gene>
    <name evidence="1" type="primary">rlmM</name>
    <name type="ordered locus">ECSP_3758</name>
</gene>
<sequence length="366" mass="41905">MNKVVLLCRPGFEKECAAEITDKAGQREIFGFARVKENAGYVIYECYQPDDGDKLIRELPFSSLIFARQWFVVGELLQHLPPEDRITPIVGMLQGVVEKGGELRVEVADTNESKELLKFCRKFTVPLRAALRDAGVLANYETPKRPVVHVFFIAPGCCYTGYSYSNNNSPFYMGIPRLKFPADAPSRSTLKLEEAFHVFIPADEWDERLANGMWAVDLGACPGGWTYQLVKRNMWVYSVDNGPMAQSLMDTGQVTWLREDGFKFRPTRSNISWMVCDMVEKPAKVAALMAQWLVNGWCRETIFNLKLPMKKRYEEVSHNLAYIQAQLDEHGINAQIQARQLYHDREEVTVHVRRIWAAVGGRRDER</sequence>
<comment type="function">
    <text evidence="1">Catalyzes the 2'-O-methylation at nucleotide C2498 in 23S rRNA.</text>
</comment>
<comment type="catalytic activity">
    <reaction evidence="1">
        <text>cytidine(2498) in 23S rRNA + S-adenosyl-L-methionine = 2'-O-methylcytidine(2498) in 23S rRNA + S-adenosyl-L-homocysteine + H(+)</text>
        <dbReference type="Rhea" id="RHEA:42788"/>
        <dbReference type="Rhea" id="RHEA-COMP:10244"/>
        <dbReference type="Rhea" id="RHEA-COMP:10245"/>
        <dbReference type="ChEBI" id="CHEBI:15378"/>
        <dbReference type="ChEBI" id="CHEBI:57856"/>
        <dbReference type="ChEBI" id="CHEBI:59789"/>
        <dbReference type="ChEBI" id="CHEBI:74495"/>
        <dbReference type="ChEBI" id="CHEBI:82748"/>
        <dbReference type="EC" id="2.1.1.186"/>
    </reaction>
</comment>
<comment type="subunit">
    <text evidence="1">Monomer.</text>
</comment>
<comment type="subcellular location">
    <subcellularLocation>
        <location evidence="1">Cytoplasm</location>
    </subcellularLocation>
</comment>
<comment type="similarity">
    <text evidence="1">Belongs to the class I-like SAM-binding methyltransferase superfamily. RNA methyltransferase RlmE family. RlmM subfamily.</text>
</comment>
<accession>C6USC2</accession>
<keyword id="KW-0963">Cytoplasm</keyword>
<keyword id="KW-0489">Methyltransferase</keyword>
<keyword id="KW-0698">rRNA processing</keyword>
<keyword id="KW-0949">S-adenosyl-L-methionine</keyword>
<keyword id="KW-0808">Transferase</keyword>